<protein>
    <recommendedName>
        <fullName>Glucose-6-phosphate 1-dehydrogenase X</fullName>
        <shortName>G6PD</shortName>
        <ecNumber evidence="4">1.1.1.49</ecNumber>
    </recommendedName>
</protein>
<comment type="function">
    <text evidence="4">Catalyzes the rate-limiting step of the oxidative pentose-phosphate pathway, which represents a route for the dissimilation of carbohydrates besides glycolysis. The main function of this enzyme is to provide reducing power (NADPH) and pentose phosphates for fatty acid and nucleic acid synthesis.</text>
</comment>
<comment type="catalytic activity">
    <reaction evidence="4">
        <text>D-glucose 6-phosphate + NADP(+) = 6-phospho-D-glucono-1,5-lactone + NADPH + H(+)</text>
        <dbReference type="Rhea" id="RHEA:15841"/>
        <dbReference type="ChEBI" id="CHEBI:15378"/>
        <dbReference type="ChEBI" id="CHEBI:57783"/>
        <dbReference type="ChEBI" id="CHEBI:57955"/>
        <dbReference type="ChEBI" id="CHEBI:58349"/>
        <dbReference type="ChEBI" id="CHEBI:61548"/>
        <dbReference type="EC" id="1.1.1.49"/>
    </reaction>
    <physiologicalReaction direction="left-to-right" evidence="7">
        <dbReference type="Rhea" id="RHEA:15842"/>
    </physiologicalReaction>
</comment>
<comment type="pathway">
    <text evidence="4">Carbohydrate degradation; pentose phosphate pathway; D-ribulose 5-phosphate from D-glucose 6-phosphate (oxidative stage): step 1/3.</text>
</comment>
<comment type="subunit">
    <text evidence="3 5">Homotetramer; dimer of dimers. Interacts with SIRT2; the interaction is enhanced by H(2)O(2) treatment (By similarity). Forms a ternary complex with ALDOB and TP53; this interaction is direct. ALDOB stabilizes the complex inhibiting G6PD activity and keeping oxidative pentose phosphate metabolism in check.</text>
</comment>
<comment type="subcellular location">
    <subcellularLocation>
        <location evidence="3">Cytoplasm</location>
        <location evidence="3">Cytosol</location>
    </subcellularLocation>
    <subcellularLocation>
        <location evidence="3">Membrane</location>
        <topology evidence="3">Peripheral membrane protein</topology>
    </subcellularLocation>
</comment>
<comment type="PTM">
    <text evidence="3">Acetylated by ELP3 at Lys-403; acetylation inhibits its homodimerization and enzyme activity. Deacetylated by SIRT2 at Lys-403; deacetylation stimulates its enzyme activity (By similarity).</text>
</comment>
<comment type="miscellaneous">
    <text>Has NADP both as cofactor (bound to the N-terminal domain) and as structural element bound to the C-terminal domain.</text>
</comment>
<comment type="similarity">
    <text evidence="6">Belongs to the glucose-6-phosphate dehydrogenase family.</text>
</comment>
<name>G6PD1_MOUSE</name>
<gene>
    <name type="primary">G6pdx</name>
    <name type="synonym">G6pd</name>
    <name type="synonym">G6pd-1</name>
</gene>
<dbReference type="EC" id="1.1.1.49" evidence="4"/>
<dbReference type="EMBL" id="Z11911">
    <property type="protein sequence ID" value="CAA77967.1"/>
    <property type="molecule type" value="mRNA"/>
</dbReference>
<dbReference type="EMBL" id="AK088135">
    <property type="protein sequence ID" value="BAC40166.1"/>
    <property type="molecule type" value="mRNA"/>
</dbReference>
<dbReference type="EMBL" id="X53617">
    <property type="protein sequence ID" value="CAA37679.1"/>
    <property type="molecule type" value="Genomic_DNA"/>
</dbReference>
<dbReference type="EMBL" id="U88533">
    <property type="protein sequence ID" value="AAB52998.1"/>
    <property type="molecule type" value="Genomic_DNA"/>
</dbReference>
<dbReference type="EMBL" id="U88534">
    <property type="protein sequence ID" value="AAB52999.1"/>
    <property type="molecule type" value="Genomic_DNA"/>
</dbReference>
<dbReference type="CCDS" id="CCDS30232.1"/>
<dbReference type="PIR" id="A56686">
    <property type="entry name" value="A56686"/>
</dbReference>
<dbReference type="RefSeq" id="NP_032088.1">
    <property type="nucleotide sequence ID" value="NM_008062.3"/>
</dbReference>
<dbReference type="SMR" id="Q00612"/>
<dbReference type="BioGRID" id="199790">
    <property type="interactions" value="28"/>
</dbReference>
<dbReference type="FunCoup" id="Q00612">
    <property type="interactions" value="2652"/>
</dbReference>
<dbReference type="IntAct" id="Q00612">
    <property type="interactions" value="2"/>
</dbReference>
<dbReference type="MINT" id="Q00612"/>
<dbReference type="STRING" id="10090.ENSMUSP00000004327"/>
<dbReference type="GlyGen" id="Q00612">
    <property type="glycosylation" value="2 sites, 1 O-linked glycan (1 site)"/>
</dbReference>
<dbReference type="iPTMnet" id="Q00612"/>
<dbReference type="PhosphoSitePlus" id="Q00612"/>
<dbReference type="SwissPalm" id="Q00612"/>
<dbReference type="REPRODUCTION-2DPAGE" id="IPI00228385"/>
<dbReference type="REPRODUCTION-2DPAGE" id="Q00612"/>
<dbReference type="jPOST" id="Q00612"/>
<dbReference type="PaxDb" id="10090-ENSMUSP00000004327"/>
<dbReference type="PeptideAtlas" id="Q00612"/>
<dbReference type="ProteomicsDB" id="267505"/>
<dbReference type="Pumba" id="Q00612"/>
<dbReference type="DNASU" id="14381"/>
<dbReference type="Ensembl" id="ENSMUST00000004327.11">
    <property type="protein sequence ID" value="ENSMUSP00000004327.5"/>
    <property type="gene ID" value="ENSMUSG00000031400.11"/>
</dbReference>
<dbReference type="GeneID" id="14381"/>
<dbReference type="KEGG" id="mmu:14381"/>
<dbReference type="UCSC" id="uc009toy.1">
    <property type="organism name" value="mouse"/>
</dbReference>
<dbReference type="AGR" id="MGI:105979"/>
<dbReference type="CTD" id="14381"/>
<dbReference type="MGI" id="MGI:105979">
    <property type="gene designation" value="G6pdx"/>
</dbReference>
<dbReference type="VEuPathDB" id="HostDB:ENSMUSG00000031400"/>
<dbReference type="eggNOG" id="KOG0563">
    <property type="taxonomic scope" value="Eukaryota"/>
</dbReference>
<dbReference type="GeneTree" id="ENSGT00530000063435"/>
<dbReference type="HOGENOM" id="CLU_013524_2_3_1"/>
<dbReference type="InParanoid" id="Q00612"/>
<dbReference type="OMA" id="ERAGYYE"/>
<dbReference type="OrthoDB" id="60984at2759"/>
<dbReference type="PhylomeDB" id="Q00612"/>
<dbReference type="TreeFam" id="TF300584"/>
<dbReference type="Reactome" id="R-MMU-5628897">
    <property type="pathway name" value="TP53 Regulates Metabolic Genes"/>
</dbReference>
<dbReference type="Reactome" id="R-MMU-71336">
    <property type="pathway name" value="Pentose phosphate pathway"/>
</dbReference>
<dbReference type="UniPathway" id="UPA00115">
    <property type="reaction ID" value="UER00408"/>
</dbReference>
<dbReference type="BioGRID-ORCS" id="14381">
    <property type="hits" value="21 hits in 79 CRISPR screens"/>
</dbReference>
<dbReference type="ChiTaRS" id="G6pdx">
    <property type="organism name" value="mouse"/>
</dbReference>
<dbReference type="PRO" id="PR:Q00612"/>
<dbReference type="Proteomes" id="UP000000589">
    <property type="component" value="Chromosome X"/>
</dbReference>
<dbReference type="RNAct" id="Q00612">
    <property type="molecule type" value="protein"/>
</dbReference>
<dbReference type="Bgee" id="ENSMUSG00000031400">
    <property type="expression patterns" value="Expressed in granulocyte and 258 other cell types or tissues"/>
</dbReference>
<dbReference type="ExpressionAtlas" id="Q00612">
    <property type="expression patterns" value="baseline and differential"/>
</dbReference>
<dbReference type="GO" id="GO:0005829">
    <property type="term" value="C:cytosol"/>
    <property type="evidence" value="ECO:0000314"/>
    <property type="project" value="MGI"/>
</dbReference>
<dbReference type="GO" id="GO:0016020">
    <property type="term" value="C:membrane"/>
    <property type="evidence" value="ECO:0007669"/>
    <property type="project" value="UniProtKB-SubCell"/>
</dbReference>
<dbReference type="GO" id="GO:0004345">
    <property type="term" value="F:glucose-6-phosphate dehydrogenase activity"/>
    <property type="evidence" value="ECO:0000314"/>
    <property type="project" value="MGI"/>
</dbReference>
<dbReference type="GO" id="GO:0042802">
    <property type="term" value="F:identical protein binding"/>
    <property type="evidence" value="ECO:0000353"/>
    <property type="project" value="MGI"/>
</dbReference>
<dbReference type="GO" id="GO:0050661">
    <property type="term" value="F:NADP binding"/>
    <property type="evidence" value="ECO:0007669"/>
    <property type="project" value="InterPro"/>
</dbReference>
<dbReference type="GO" id="GO:0001998">
    <property type="term" value="P:angiotensin-mediated vasoconstriction involved in regulation of systemic arterial blood pressure"/>
    <property type="evidence" value="ECO:0000315"/>
    <property type="project" value="MGI"/>
</dbReference>
<dbReference type="GO" id="GO:0002033">
    <property type="term" value="P:angiotensin-mediated vasodilation involved in regulation of systemic arterial blood pressure"/>
    <property type="evidence" value="ECO:0000315"/>
    <property type="project" value="MGI"/>
</dbReference>
<dbReference type="GO" id="GO:0048821">
    <property type="term" value="P:erythrocyte development"/>
    <property type="evidence" value="ECO:0000315"/>
    <property type="project" value="MGI"/>
</dbReference>
<dbReference type="GO" id="GO:0051156">
    <property type="term" value="P:glucose 6-phosphate metabolic process"/>
    <property type="evidence" value="ECO:0000250"/>
    <property type="project" value="UniProtKB"/>
</dbReference>
<dbReference type="GO" id="GO:0006006">
    <property type="term" value="P:glucose metabolic process"/>
    <property type="evidence" value="ECO:0007669"/>
    <property type="project" value="UniProtKB-KW"/>
</dbReference>
<dbReference type="GO" id="GO:0006749">
    <property type="term" value="P:glutathione metabolic process"/>
    <property type="evidence" value="ECO:0000315"/>
    <property type="project" value="MGI"/>
</dbReference>
<dbReference type="GO" id="GO:0006741">
    <property type="term" value="P:NADP biosynthetic process"/>
    <property type="evidence" value="ECO:0000314"/>
    <property type="project" value="MGI"/>
</dbReference>
<dbReference type="GO" id="GO:0006739">
    <property type="term" value="P:NADP metabolic process"/>
    <property type="evidence" value="ECO:0000250"/>
    <property type="project" value="UniProtKB"/>
</dbReference>
<dbReference type="GO" id="GO:0006740">
    <property type="term" value="P:NADPH regeneration"/>
    <property type="evidence" value="ECO:0000314"/>
    <property type="project" value="MGI"/>
</dbReference>
<dbReference type="GO" id="GO:0019322">
    <property type="term" value="P:pentose biosynthetic process"/>
    <property type="evidence" value="ECO:0000314"/>
    <property type="project" value="MGI"/>
</dbReference>
<dbReference type="GO" id="GO:0009051">
    <property type="term" value="P:pentose-phosphate shunt, oxidative branch"/>
    <property type="evidence" value="ECO:0000315"/>
    <property type="project" value="MGI"/>
</dbReference>
<dbReference type="GO" id="GO:0040014">
    <property type="term" value="P:regulation of multicellular organism growth"/>
    <property type="evidence" value="ECO:0000315"/>
    <property type="project" value="MGI"/>
</dbReference>
<dbReference type="GO" id="GO:0006979">
    <property type="term" value="P:response to oxidative stress"/>
    <property type="evidence" value="ECO:0000315"/>
    <property type="project" value="MGI"/>
</dbReference>
<dbReference type="FunFam" id="3.30.360.10:FF:000013">
    <property type="entry name" value="Glucose-6-phosphate 1-dehydrogenase"/>
    <property type="match status" value="1"/>
</dbReference>
<dbReference type="FunFam" id="3.40.50.720:FF:000111">
    <property type="entry name" value="Glucose-6-phosphate 1-dehydrogenase"/>
    <property type="match status" value="1"/>
</dbReference>
<dbReference type="Gene3D" id="3.30.360.10">
    <property type="entry name" value="Dihydrodipicolinate Reductase, domain 2"/>
    <property type="match status" value="1"/>
</dbReference>
<dbReference type="Gene3D" id="3.40.50.720">
    <property type="entry name" value="NAD(P)-binding Rossmann-like Domain"/>
    <property type="match status" value="1"/>
</dbReference>
<dbReference type="HAMAP" id="MF_00966">
    <property type="entry name" value="G6PD"/>
    <property type="match status" value="1"/>
</dbReference>
<dbReference type="InterPro" id="IPR001282">
    <property type="entry name" value="G6P_DH"/>
</dbReference>
<dbReference type="InterPro" id="IPR019796">
    <property type="entry name" value="G6P_DH_AS"/>
</dbReference>
<dbReference type="InterPro" id="IPR022675">
    <property type="entry name" value="G6P_DH_C"/>
</dbReference>
<dbReference type="InterPro" id="IPR022674">
    <property type="entry name" value="G6P_DH_NAD-bd"/>
</dbReference>
<dbReference type="InterPro" id="IPR036291">
    <property type="entry name" value="NAD(P)-bd_dom_sf"/>
</dbReference>
<dbReference type="NCBIfam" id="TIGR00871">
    <property type="entry name" value="zwf"/>
    <property type="match status" value="1"/>
</dbReference>
<dbReference type="PANTHER" id="PTHR23429:SF0">
    <property type="entry name" value="GLUCOSE-6-PHOSPHATE 1-DEHYDROGENASE"/>
    <property type="match status" value="1"/>
</dbReference>
<dbReference type="PANTHER" id="PTHR23429">
    <property type="entry name" value="GLUCOSE-6-PHOSPHATE 1-DEHYDROGENASE G6PD"/>
    <property type="match status" value="1"/>
</dbReference>
<dbReference type="Pfam" id="PF02781">
    <property type="entry name" value="G6PD_C"/>
    <property type="match status" value="1"/>
</dbReference>
<dbReference type="Pfam" id="PF00479">
    <property type="entry name" value="G6PD_N"/>
    <property type="match status" value="1"/>
</dbReference>
<dbReference type="PIRSF" id="PIRSF000110">
    <property type="entry name" value="G6PD"/>
    <property type="match status" value="1"/>
</dbReference>
<dbReference type="PRINTS" id="PR00079">
    <property type="entry name" value="G6PDHDRGNASE"/>
</dbReference>
<dbReference type="SUPFAM" id="SSF55347">
    <property type="entry name" value="Glyceraldehyde-3-phosphate dehydrogenase-like, C-terminal domain"/>
    <property type="match status" value="1"/>
</dbReference>
<dbReference type="SUPFAM" id="SSF51735">
    <property type="entry name" value="NAD(P)-binding Rossmann-fold domains"/>
    <property type="match status" value="1"/>
</dbReference>
<dbReference type="PROSITE" id="PS00069">
    <property type="entry name" value="G6P_DEHYDROGENASE"/>
    <property type="match status" value="1"/>
</dbReference>
<sequence length="515" mass="59263">MAEQVALSRTQVCGILREELYQGDAFHQADTHIFIIMGASGDLAKKKIYPTIWWLFRDGLLPEDTFIVGYARSRLTVDDIRKQSEPFFKATPEERPKLEEFFARNSYVAGQYDDAASYKHLNSHMNALHQGMQANRLFYLALPPTVYEAVTKNIQETCMSQTGWNRIIVEKPFGRDLQSSNQLSNHISSLFREDQIYRIDHYLGKEMVQNLMVLRFANRIFGPIWNRDNIACVILTFKEPFGTEGRGGYFDEFGIIRDVMQNHLLQMLCLVAMEKPATTGSDDVRDEKVKVLKCISEVETDNVVLGQYVGNPNGEGEAANGYLDDPTVPHGSTTATFAAAVLYVENERWDGVPFILRCGKALNERKAEVRLQFRDVAGDIFHQQCKRNELVIRVQPNEAVYTKMMTKKPGMFFNPEESELDLTYGNRYKNVKLPDAYERLILDVFCGSQMHFVRSDELREAWRIFTPLLHKIDREKPQPIPYVYGSRGPTEADELMKRVGFQYEGTYKWVNPHKL</sequence>
<reference key="1">
    <citation type="journal article" date="1993" name="DNA Seq.">
        <title>Sequence of mouse glucose-6-phosphate dehydrogenase cDNA.</title>
        <authorList>
            <person name="Zollo M.Z."/>
            <person name="D'Urso M."/>
            <person name="Schlessinger D."/>
            <person name="Chen E.Y."/>
        </authorList>
    </citation>
    <scope>NUCLEOTIDE SEQUENCE [MRNA]</scope>
</reference>
<reference key="2">
    <citation type="journal article" date="2005" name="Science">
        <title>The transcriptional landscape of the mammalian genome.</title>
        <authorList>
            <person name="Carninci P."/>
            <person name="Kasukawa T."/>
            <person name="Katayama S."/>
            <person name="Gough J."/>
            <person name="Frith M.C."/>
            <person name="Maeda N."/>
            <person name="Oyama R."/>
            <person name="Ravasi T."/>
            <person name="Lenhard B."/>
            <person name="Wells C."/>
            <person name="Kodzius R."/>
            <person name="Shimokawa K."/>
            <person name="Bajic V.B."/>
            <person name="Brenner S.E."/>
            <person name="Batalov S."/>
            <person name="Forrest A.R."/>
            <person name="Zavolan M."/>
            <person name="Davis M.J."/>
            <person name="Wilming L.G."/>
            <person name="Aidinis V."/>
            <person name="Allen J.E."/>
            <person name="Ambesi-Impiombato A."/>
            <person name="Apweiler R."/>
            <person name="Aturaliya R.N."/>
            <person name="Bailey T.L."/>
            <person name="Bansal M."/>
            <person name="Baxter L."/>
            <person name="Beisel K.W."/>
            <person name="Bersano T."/>
            <person name="Bono H."/>
            <person name="Chalk A.M."/>
            <person name="Chiu K.P."/>
            <person name="Choudhary V."/>
            <person name="Christoffels A."/>
            <person name="Clutterbuck D.R."/>
            <person name="Crowe M.L."/>
            <person name="Dalla E."/>
            <person name="Dalrymple B.P."/>
            <person name="de Bono B."/>
            <person name="Della Gatta G."/>
            <person name="di Bernardo D."/>
            <person name="Down T."/>
            <person name="Engstrom P."/>
            <person name="Fagiolini M."/>
            <person name="Faulkner G."/>
            <person name="Fletcher C.F."/>
            <person name="Fukushima T."/>
            <person name="Furuno M."/>
            <person name="Futaki S."/>
            <person name="Gariboldi M."/>
            <person name="Georgii-Hemming P."/>
            <person name="Gingeras T.R."/>
            <person name="Gojobori T."/>
            <person name="Green R.E."/>
            <person name="Gustincich S."/>
            <person name="Harbers M."/>
            <person name="Hayashi Y."/>
            <person name="Hensch T.K."/>
            <person name="Hirokawa N."/>
            <person name="Hill D."/>
            <person name="Huminiecki L."/>
            <person name="Iacono M."/>
            <person name="Ikeo K."/>
            <person name="Iwama A."/>
            <person name="Ishikawa T."/>
            <person name="Jakt M."/>
            <person name="Kanapin A."/>
            <person name="Katoh M."/>
            <person name="Kawasawa Y."/>
            <person name="Kelso J."/>
            <person name="Kitamura H."/>
            <person name="Kitano H."/>
            <person name="Kollias G."/>
            <person name="Krishnan S.P."/>
            <person name="Kruger A."/>
            <person name="Kummerfeld S.K."/>
            <person name="Kurochkin I.V."/>
            <person name="Lareau L.F."/>
            <person name="Lazarevic D."/>
            <person name="Lipovich L."/>
            <person name="Liu J."/>
            <person name="Liuni S."/>
            <person name="McWilliam S."/>
            <person name="Madan Babu M."/>
            <person name="Madera M."/>
            <person name="Marchionni L."/>
            <person name="Matsuda H."/>
            <person name="Matsuzawa S."/>
            <person name="Miki H."/>
            <person name="Mignone F."/>
            <person name="Miyake S."/>
            <person name="Morris K."/>
            <person name="Mottagui-Tabar S."/>
            <person name="Mulder N."/>
            <person name="Nakano N."/>
            <person name="Nakauchi H."/>
            <person name="Ng P."/>
            <person name="Nilsson R."/>
            <person name="Nishiguchi S."/>
            <person name="Nishikawa S."/>
            <person name="Nori F."/>
            <person name="Ohara O."/>
            <person name="Okazaki Y."/>
            <person name="Orlando V."/>
            <person name="Pang K.C."/>
            <person name="Pavan W.J."/>
            <person name="Pavesi G."/>
            <person name="Pesole G."/>
            <person name="Petrovsky N."/>
            <person name="Piazza S."/>
            <person name="Reed J."/>
            <person name="Reid J.F."/>
            <person name="Ring B.Z."/>
            <person name="Ringwald M."/>
            <person name="Rost B."/>
            <person name="Ruan Y."/>
            <person name="Salzberg S.L."/>
            <person name="Sandelin A."/>
            <person name="Schneider C."/>
            <person name="Schoenbach C."/>
            <person name="Sekiguchi K."/>
            <person name="Semple C.A."/>
            <person name="Seno S."/>
            <person name="Sessa L."/>
            <person name="Sheng Y."/>
            <person name="Shibata Y."/>
            <person name="Shimada H."/>
            <person name="Shimada K."/>
            <person name="Silva D."/>
            <person name="Sinclair B."/>
            <person name="Sperling S."/>
            <person name="Stupka E."/>
            <person name="Sugiura K."/>
            <person name="Sultana R."/>
            <person name="Takenaka Y."/>
            <person name="Taki K."/>
            <person name="Tammoja K."/>
            <person name="Tan S.L."/>
            <person name="Tang S."/>
            <person name="Taylor M.S."/>
            <person name="Tegner J."/>
            <person name="Teichmann S.A."/>
            <person name="Ueda H.R."/>
            <person name="van Nimwegen E."/>
            <person name="Verardo R."/>
            <person name="Wei C.L."/>
            <person name="Yagi K."/>
            <person name="Yamanishi H."/>
            <person name="Zabarovsky E."/>
            <person name="Zhu S."/>
            <person name="Zimmer A."/>
            <person name="Hide W."/>
            <person name="Bult C."/>
            <person name="Grimmond S.M."/>
            <person name="Teasdale R.D."/>
            <person name="Liu E.T."/>
            <person name="Brusic V."/>
            <person name="Quackenbush J."/>
            <person name="Wahlestedt C."/>
            <person name="Mattick J.S."/>
            <person name="Hume D.A."/>
            <person name="Kai C."/>
            <person name="Sasaki D."/>
            <person name="Tomaru Y."/>
            <person name="Fukuda S."/>
            <person name="Kanamori-Katayama M."/>
            <person name="Suzuki M."/>
            <person name="Aoki J."/>
            <person name="Arakawa T."/>
            <person name="Iida J."/>
            <person name="Imamura K."/>
            <person name="Itoh M."/>
            <person name="Kato T."/>
            <person name="Kawaji H."/>
            <person name="Kawagashira N."/>
            <person name="Kawashima T."/>
            <person name="Kojima M."/>
            <person name="Kondo S."/>
            <person name="Konno H."/>
            <person name="Nakano K."/>
            <person name="Ninomiya N."/>
            <person name="Nishio T."/>
            <person name="Okada M."/>
            <person name="Plessy C."/>
            <person name="Shibata K."/>
            <person name="Shiraki T."/>
            <person name="Suzuki S."/>
            <person name="Tagami M."/>
            <person name="Waki K."/>
            <person name="Watahiki A."/>
            <person name="Okamura-Oho Y."/>
            <person name="Suzuki H."/>
            <person name="Kawai J."/>
            <person name="Hayashizaki Y."/>
        </authorList>
    </citation>
    <scope>NUCLEOTIDE SEQUENCE [LARGE SCALE MRNA]</scope>
    <source>
        <strain>NOD</strain>
        <tissue>Thymus</tissue>
    </source>
</reference>
<reference key="3">
    <citation type="journal article" date="1991" name="Gene">
        <title>The CpG island in the 5' region of the G6PD gene of man and mouse.</title>
        <authorList>
            <person name="Toniolo D."/>
            <person name="Filippi M."/>
            <person name="Dono R."/>
            <person name="Lettieri T."/>
            <person name="Martini G."/>
        </authorList>
    </citation>
    <scope>NUCLEOTIDE SEQUENCE [GENOMIC DNA] OF 1-40</scope>
    <source>
        <strain>BALB/cJ</strain>
    </source>
</reference>
<reference key="4">
    <citation type="submission" date="2007-07" db="UniProtKB">
        <authorList>
            <person name="Lubec G."/>
            <person name="Klug S."/>
            <person name="Yang J.W."/>
            <person name="Zigmond M."/>
        </authorList>
    </citation>
    <scope>PROTEIN SEQUENCE OF 57-71; 175-191 AND 247-257</scope>
    <scope>IDENTIFICATION BY MASS SPECTROMETRY</scope>
    <source>
        <tissue>Brain</tissue>
        <tissue>Hippocampus</tissue>
    </source>
</reference>
<reference key="5">
    <citation type="journal article" date="1997" name="Mutat. Res.">
        <title>Somatic mutation of the glucose-6-phosphate dehydrogenase (g6pd) gene in colonic stem cells and crypt restricted loss of G6PD activity.</title>
        <authorList>
            <person name="Kuraguchi M."/>
            <person name="Thomas G.A."/>
            <person name="Williams E.D."/>
        </authorList>
    </citation>
    <scope>NUCLEOTIDE SEQUENCE [GENOMIC DNA] OF 163-214 AND 352-454</scope>
    <source>
        <strain>BALB/cJ</strain>
    </source>
</reference>
<reference key="6">
    <citation type="journal article" date="2003" name="Arch. Biochem. Biophys.">
        <title>Murine hexose-6-phosphate dehydrogenase: a bifunctional enzyme with broad substrate specificity and 6-phosphogluconolactonase activity.</title>
        <authorList>
            <person name="Clarke J.L."/>
            <person name="Mason P.J."/>
        </authorList>
    </citation>
    <scope>FUNCTION</scope>
    <scope>CATALYTIC ACTIVITY</scope>
    <scope>PATHWAY</scope>
</reference>
<reference key="7">
    <citation type="journal article" date="2007" name="J. Immunol.">
        <title>Quantitative time-resolved phosphoproteomic analysis of mast cell signaling.</title>
        <authorList>
            <person name="Cao L."/>
            <person name="Yu K."/>
            <person name="Banh C."/>
            <person name="Nguyen V."/>
            <person name="Ritz A."/>
            <person name="Raphael B.J."/>
            <person name="Kawakami Y."/>
            <person name="Kawakami T."/>
            <person name="Salomon A.R."/>
        </authorList>
    </citation>
    <scope>PHOSPHORYLATION [LARGE SCALE ANALYSIS] AT TYR-507</scope>
    <scope>IDENTIFICATION BY MASS SPECTROMETRY [LARGE SCALE ANALYSIS]</scope>
    <source>
        <tissue>Mast cell</tissue>
    </source>
</reference>
<reference key="8">
    <citation type="journal article" date="2010" name="Cell">
        <title>A tissue-specific atlas of mouse protein phosphorylation and expression.</title>
        <authorList>
            <person name="Huttlin E.L."/>
            <person name="Jedrychowski M.P."/>
            <person name="Elias J.E."/>
            <person name="Goswami T."/>
            <person name="Rad R."/>
            <person name="Beausoleil S.A."/>
            <person name="Villen J."/>
            <person name="Haas W."/>
            <person name="Sowa M.E."/>
            <person name="Gygi S.P."/>
        </authorList>
    </citation>
    <scope>IDENTIFICATION BY MASS SPECTROMETRY [LARGE SCALE ANALYSIS]</scope>
    <source>
        <tissue>Brain</tissue>
        <tissue>Brown adipose tissue</tissue>
        <tissue>Heart</tissue>
        <tissue>Kidney</tissue>
        <tissue>Liver</tissue>
        <tissue>Lung</tissue>
        <tissue>Pancreas</tissue>
        <tissue>Spleen</tissue>
        <tissue>Testis</tissue>
    </source>
</reference>
<reference key="9">
    <citation type="journal article" date="2020" name="Nat. Cancer">
        <title>Aldolase B suppresses hepatocellular carcinogenesis by inhibiting G6PD and pentose phosphate pathways.</title>
        <authorList>
            <person name="Li M."/>
            <person name="He X."/>
            <person name="Guo W."/>
            <person name="Yu H."/>
            <person name="Zhang S."/>
            <person name="Wang N."/>
            <person name="Liu G."/>
            <person name="Sa R."/>
            <person name="Shen X."/>
            <person name="Jiang Y."/>
            <person name="Tang Y."/>
            <person name="Zhuo Y."/>
            <person name="Yin C."/>
            <person name="Tu Q."/>
            <person name="Li N."/>
            <person name="Nie X."/>
            <person name="Li Y."/>
            <person name="Hu Z."/>
            <person name="Zhu H."/>
            <person name="Ding J."/>
            <person name="Li Z."/>
            <person name="Liu T."/>
            <person name="Zhang F."/>
            <person name="Zhou H."/>
            <person name="Li S."/>
            <person name="Yue J."/>
            <person name="Yan Z."/>
            <person name="Cheng S."/>
            <person name="Tao Y."/>
            <person name="Yin H."/>
        </authorList>
    </citation>
    <scope>INTERACTION WITH ALDOB AND TP53</scope>
</reference>
<proteinExistence type="evidence at protein level"/>
<keyword id="KW-0007">Acetylation</keyword>
<keyword id="KW-0119">Carbohydrate metabolism</keyword>
<keyword id="KW-0963">Cytoplasm</keyword>
<keyword id="KW-0903">Direct protein sequencing</keyword>
<keyword id="KW-0313">Glucose metabolism</keyword>
<keyword id="KW-0472">Membrane</keyword>
<keyword id="KW-0521">NADP</keyword>
<keyword id="KW-0560">Oxidoreductase</keyword>
<keyword id="KW-0597">Phosphoprotein</keyword>
<keyword id="KW-1185">Reference proteome</keyword>
<feature type="initiator methionine" description="Removed" evidence="1">
    <location>
        <position position="1"/>
    </location>
</feature>
<feature type="chain" id="PRO_0000068085" description="Glucose-6-phosphate 1-dehydrogenase X">
    <location>
        <begin position="2"/>
        <end position="515"/>
    </location>
</feature>
<feature type="active site" description="Proton acceptor" evidence="2">
    <location>
        <position position="263"/>
    </location>
</feature>
<feature type="binding site" evidence="3">
    <location>
        <begin position="38"/>
        <end position="45"/>
    </location>
    <ligand>
        <name>NADP(+)</name>
        <dbReference type="ChEBI" id="CHEBI:58349"/>
        <label>1</label>
    </ligand>
</feature>
<feature type="binding site" evidence="3">
    <location>
        <position position="72"/>
    </location>
    <ligand>
        <name>NADP(+)</name>
        <dbReference type="ChEBI" id="CHEBI:58349"/>
        <label>1</label>
    </ligand>
</feature>
<feature type="binding site" evidence="3">
    <location>
        <position position="147"/>
    </location>
    <ligand>
        <name>NADP(+)</name>
        <dbReference type="ChEBI" id="CHEBI:58349"/>
        <label>1</label>
    </ligand>
</feature>
<feature type="binding site" evidence="3">
    <location>
        <position position="171"/>
    </location>
    <ligand>
        <name>D-glucose 6-phosphate</name>
        <dbReference type="ChEBI" id="CHEBI:61548"/>
    </ligand>
</feature>
<feature type="binding site" evidence="3">
    <location>
        <position position="171"/>
    </location>
    <ligand>
        <name>NADP(+)</name>
        <dbReference type="ChEBI" id="CHEBI:58349"/>
        <label>1</label>
    </ligand>
</feature>
<feature type="binding site" evidence="3">
    <location>
        <begin position="201"/>
        <end position="205"/>
    </location>
    <ligand>
        <name>D-glucose 6-phosphate</name>
        <dbReference type="ChEBI" id="CHEBI:61548"/>
    </ligand>
</feature>
<feature type="binding site" evidence="3">
    <location>
        <position position="239"/>
    </location>
    <ligand>
        <name>D-glucose 6-phosphate</name>
        <dbReference type="ChEBI" id="CHEBI:61548"/>
    </ligand>
</feature>
<feature type="binding site" evidence="3">
    <location>
        <position position="258"/>
    </location>
    <ligand>
        <name>D-glucose 6-phosphate</name>
        <dbReference type="ChEBI" id="CHEBI:61548"/>
    </ligand>
</feature>
<feature type="binding site" evidence="3">
    <location>
        <position position="357"/>
    </location>
    <ligand>
        <name>NADP(+)</name>
        <dbReference type="ChEBI" id="CHEBI:58349"/>
        <label>2</label>
    </ligand>
</feature>
<feature type="binding site" evidence="3">
    <location>
        <position position="360"/>
    </location>
    <ligand>
        <name>D-glucose 6-phosphate</name>
        <dbReference type="ChEBI" id="CHEBI:61548"/>
    </ligand>
</feature>
<feature type="binding site" evidence="3">
    <location>
        <position position="365"/>
    </location>
    <ligand>
        <name>D-glucose 6-phosphate</name>
        <dbReference type="ChEBI" id="CHEBI:61548"/>
    </ligand>
</feature>
<feature type="binding site" evidence="3">
    <location>
        <position position="366"/>
    </location>
    <ligand>
        <name>NADP(+)</name>
        <dbReference type="ChEBI" id="CHEBI:58349"/>
        <label>2</label>
    </ligand>
</feature>
<feature type="binding site" evidence="3">
    <location>
        <position position="370"/>
    </location>
    <ligand>
        <name>NADP(+)</name>
        <dbReference type="ChEBI" id="CHEBI:58349"/>
        <label>2</label>
    </ligand>
</feature>
<feature type="binding site" evidence="3">
    <location>
        <position position="393"/>
    </location>
    <ligand>
        <name>NADP(+)</name>
        <dbReference type="ChEBI" id="CHEBI:58349"/>
        <label>2</label>
    </ligand>
</feature>
<feature type="binding site" evidence="3">
    <location>
        <position position="395"/>
    </location>
    <ligand>
        <name>D-glucose 6-phosphate</name>
        <dbReference type="ChEBI" id="CHEBI:61548"/>
    </ligand>
</feature>
<feature type="binding site" evidence="3">
    <location>
        <begin position="401"/>
        <end position="403"/>
    </location>
    <ligand>
        <name>NADP(+)</name>
        <dbReference type="ChEBI" id="CHEBI:58349"/>
        <label>2</label>
    </ligand>
</feature>
<feature type="binding site" evidence="3">
    <location>
        <begin position="421"/>
        <end position="423"/>
    </location>
    <ligand>
        <name>NADP(+)</name>
        <dbReference type="ChEBI" id="CHEBI:58349"/>
        <label>2</label>
    </ligand>
</feature>
<feature type="binding site" evidence="3">
    <location>
        <position position="487"/>
    </location>
    <ligand>
        <name>NADP(+)</name>
        <dbReference type="ChEBI" id="CHEBI:58349"/>
        <label>2</label>
    </ligand>
</feature>
<feature type="binding site" evidence="3">
    <location>
        <position position="503"/>
    </location>
    <ligand>
        <name>NADP(+)</name>
        <dbReference type="ChEBI" id="CHEBI:58349"/>
        <label>2</label>
    </ligand>
</feature>
<feature type="binding site" evidence="3">
    <location>
        <position position="509"/>
    </location>
    <ligand>
        <name>NADP(+)</name>
        <dbReference type="ChEBI" id="CHEBI:58349"/>
        <label>2</label>
    </ligand>
</feature>
<feature type="modified residue" description="N-acetylalanine" evidence="1">
    <location>
        <position position="2"/>
    </location>
</feature>
<feature type="modified residue" description="Phosphotyrosine" evidence="8">
    <location>
        <position position="507"/>
    </location>
</feature>
<feature type="sequence conflict" description="In Ref. 3; CAA37679." evidence="6" ref="3">
    <original>D</original>
    <variation>Y</variation>
    <location>
        <position position="24"/>
    </location>
</feature>
<evidence type="ECO:0000250" key="1">
    <source>
        <dbReference type="UniProtKB" id="P05370"/>
    </source>
</evidence>
<evidence type="ECO:0000250" key="2">
    <source>
        <dbReference type="UniProtKB" id="P11411"/>
    </source>
</evidence>
<evidence type="ECO:0000250" key="3">
    <source>
        <dbReference type="UniProtKB" id="P11413"/>
    </source>
</evidence>
<evidence type="ECO:0000269" key="4">
    <source>
    </source>
</evidence>
<evidence type="ECO:0000269" key="5">
    <source>
    </source>
</evidence>
<evidence type="ECO:0000305" key="6"/>
<evidence type="ECO:0000305" key="7">
    <source>
    </source>
</evidence>
<evidence type="ECO:0007744" key="8">
    <source>
    </source>
</evidence>
<organism>
    <name type="scientific">Mus musculus</name>
    <name type="common">Mouse</name>
    <dbReference type="NCBI Taxonomy" id="10090"/>
    <lineage>
        <taxon>Eukaryota</taxon>
        <taxon>Metazoa</taxon>
        <taxon>Chordata</taxon>
        <taxon>Craniata</taxon>
        <taxon>Vertebrata</taxon>
        <taxon>Euteleostomi</taxon>
        <taxon>Mammalia</taxon>
        <taxon>Eutheria</taxon>
        <taxon>Euarchontoglires</taxon>
        <taxon>Glires</taxon>
        <taxon>Rodentia</taxon>
        <taxon>Myomorpha</taxon>
        <taxon>Muroidea</taxon>
        <taxon>Muridae</taxon>
        <taxon>Murinae</taxon>
        <taxon>Mus</taxon>
        <taxon>Mus</taxon>
    </lineage>
</organism>
<accession>Q00612</accession>